<comment type="function">
    <text evidence="1">Assembles around the rod to form the L-ring and probably protects the motor/basal body from shearing forces during rotation.</text>
</comment>
<comment type="subunit">
    <text evidence="1">The basal body constitutes a major portion of the flagellar organelle and consists of four rings (L,P,S, and M) mounted on a central rod.</text>
</comment>
<comment type="subcellular location">
    <subcellularLocation>
        <location evidence="1">Periplasm</location>
    </subcellularLocation>
    <subcellularLocation>
        <location evidence="1">Bacterial flagellum basal body</location>
    </subcellularLocation>
</comment>
<comment type="similarity">
    <text evidence="1">Belongs to the FlgI family.</text>
</comment>
<accession>B4TTE5</accession>
<protein>
    <recommendedName>
        <fullName evidence="1">Flagellar P-ring protein</fullName>
    </recommendedName>
    <alternativeName>
        <fullName evidence="1">Basal body P-ring protein</fullName>
    </alternativeName>
</protein>
<organism>
    <name type="scientific">Salmonella schwarzengrund (strain CVM19633)</name>
    <dbReference type="NCBI Taxonomy" id="439843"/>
    <lineage>
        <taxon>Bacteria</taxon>
        <taxon>Pseudomonadati</taxon>
        <taxon>Pseudomonadota</taxon>
        <taxon>Gammaproteobacteria</taxon>
        <taxon>Enterobacterales</taxon>
        <taxon>Enterobacteriaceae</taxon>
        <taxon>Salmonella</taxon>
    </lineage>
</organism>
<sequence>MFKALAGIVLALVATLAHAERIRDLTSVQGVRENSLIGYGLVVGLDGTGDQTTQTPFTTQTLNNMLSQLGITVPTGTNMQLKNVAAVMVTASYPPFARQGQTIDVVVSSMGNAKSLRGGTLLMTPLKGVDSQVYALAQGNILVGGAGASAGGSSVQVNQLNGGRITNGAIIERELPTQFGAGNTINLQLNDEDFTMAQQITDAINRARGYGSATALDARTVQVRVPSGNSSQVRFLADIQNMEVNVTPQDAKVVINSRTGSVVMNREVTLDSCAVAQGNLSVTVNRQLNVNQPNTPFGGGQTVVTPQTQIDLRQSGGSLQSVRSSANLNSVVRALNALGATPMDLMSILQSMQSAGCLRAKLEII</sequence>
<keyword id="KW-0975">Bacterial flagellum</keyword>
<keyword id="KW-0574">Periplasm</keyword>
<keyword id="KW-0732">Signal</keyword>
<evidence type="ECO:0000255" key="1">
    <source>
        <dbReference type="HAMAP-Rule" id="MF_00416"/>
    </source>
</evidence>
<name>FLGI_SALSV</name>
<gene>
    <name evidence="1" type="primary">flgI</name>
    <name type="ordered locus">SeSA_A1249</name>
</gene>
<feature type="signal peptide" evidence="1">
    <location>
        <begin position="1"/>
        <end position="19"/>
    </location>
</feature>
<feature type="chain" id="PRO_1000123983" description="Flagellar P-ring protein">
    <location>
        <begin position="20"/>
        <end position="365"/>
    </location>
</feature>
<proteinExistence type="inferred from homology"/>
<reference key="1">
    <citation type="journal article" date="2011" name="J. Bacteriol.">
        <title>Comparative genomics of 28 Salmonella enterica isolates: evidence for CRISPR-mediated adaptive sublineage evolution.</title>
        <authorList>
            <person name="Fricke W.F."/>
            <person name="Mammel M.K."/>
            <person name="McDermott P.F."/>
            <person name="Tartera C."/>
            <person name="White D.G."/>
            <person name="Leclerc J.E."/>
            <person name="Ravel J."/>
            <person name="Cebula T.A."/>
        </authorList>
    </citation>
    <scope>NUCLEOTIDE SEQUENCE [LARGE SCALE GENOMIC DNA]</scope>
    <source>
        <strain>CVM19633</strain>
    </source>
</reference>
<dbReference type="EMBL" id="CP001127">
    <property type="protein sequence ID" value="ACF92039.1"/>
    <property type="molecule type" value="Genomic_DNA"/>
</dbReference>
<dbReference type="RefSeq" id="WP_001518955.1">
    <property type="nucleotide sequence ID" value="NC_011094.1"/>
</dbReference>
<dbReference type="SMR" id="B4TTE5"/>
<dbReference type="KEGG" id="sew:SeSA_A1249"/>
<dbReference type="HOGENOM" id="CLU_045235_1_0_6"/>
<dbReference type="Proteomes" id="UP000001865">
    <property type="component" value="Chromosome"/>
</dbReference>
<dbReference type="GO" id="GO:0009428">
    <property type="term" value="C:bacterial-type flagellum basal body, distal rod, P ring"/>
    <property type="evidence" value="ECO:0007669"/>
    <property type="project" value="InterPro"/>
</dbReference>
<dbReference type="GO" id="GO:0030288">
    <property type="term" value="C:outer membrane-bounded periplasmic space"/>
    <property type="evidence" value="ECO:0007669"/>
    <property type="project" value="InterPro"/>
</dbReference>
<dbReference type="GO" id="GO:0005198">
    <property type="term" value="F:structural molecule activity"/>
    <property type="evidence" value="ECO:0007669"/>
    <property type="project" value="InterPro"/>
</dbReference>
<dbReference type="GO" id="GO:0071973">
    <property type="term" value="P:bacterial-type flagellum-dependent cell motility"/>
    <property type="evidence" value="ECO:0007669"/>
    <property type="project" value="InterPro"/>
</dbReference>
<dbReference type="HAMAP" id="MF_00416">
    <property type="entry name" value="FlgI"/>
    <property type="match status" value="1"/>
</dbReference>
<dbReference type="InterPro" id="IPR001782">
    <property type="entry name" value="Flag_FlgI"/>
</dbReference>
<dbReference type="NCBIfam" id="NF003676">
    <property type="entry name" value="PRK05303.1"/>
    <property type="match status" value="1"/>
</dbReference>
<dbReference type="PANTHER" id="PTHR30381">
    <property type="entry name" value="FLAGELLAR P-RING PERIPLASMIC PROTEIN FLGI"/>
    <property type="match status" value="1"/>
</dbReference>
<dbReference type="PANTHER" id="PTHR30381:SF0">
    <property type="entry name" value="FLAGELLAR P-RING PROTEIN"/>
    <property type="match status" value="1"/>
</dbReference>
<dbReference type="Pfam" id="PF02119">
    <property type="entry name" value="FlgI"/>
    <property type="match status" value="1"/>
</dbReference>
<dbReference type="PRINTS" id="PR01010">
    <property type="entry name" value="FLGPRINGFLGI"/>
</dbReference>